<gene>
    <name evidence="1" type="primary">rpmA</name>
    <name type="ordered locus">Bcen_0100</name>
</gene>
<organism>
    <name type="scientific">Burkholderia orbicola (strain AU 1054)</name>
    <dbReference type="NCBI Taxonomy" id="331271"/>
    <lineage>
        <taxon>Bacteria</taxon>
        <taxon>Pseudomonadati</taxon>
        <taxon>Pseudomonadota</taxon>
        <taxon>Betaproteobacteria</taxon>
        <taxon>Burkholderiales</taxon>
        <taxon>Burkholderiaceae</taxon>
        <taxon>Burkholderia</taxon>
        <taxon>Burkholderia cepacia complex</taxon>
        <taxon>Burkholderia orbicola</taxon>
    </lineage>
</organism>
<protein>
    <recommendedName>
        <fullName evidence="1">Large ribosomal subunit protein bL27</fullName>
    </recommendedName>
    <alternativeName>
        <fullName evidence="3">50S ribosomal protein L27</fullName>
    </alternativeName>
</protein>
<dbReference type="EMBL" id="CP000378">
    <property type="protein sequence ID" value="ABF75014.1"/>
    <property type="molecule type" value="Genomic_DNA"/>
</dbReference>
<dbReference type="SMR" id="Q1BZE1"/>
<dbReference type="HOGENOM" id="CLU_095424_4_1_4"/>
<dbReference type="GO" id="GO:0022625">
    <property type="term" value="C:cytosolic large ribosomal subunit"/>
    <property type="evidence" value="ECO:0007669"/>
    <property type="project" value="TreeGrafter"/>
</dbReference>
<dbReference type="GO" id="GO:0003735">
    <property type="term" value="F:structural constituent of ribosome"/>
    <property type="evidence" value="ECO:0007669"/>
    <property type="project" value="InterPro"/>
</dbReference>
<dbReference type="GO" id="GO:0006412">
    <property type="term" value="P:translation"/>
    <property type="evidence" value="ECO:0007669"/>
    <property type="project" value="UniProtKB-UniRule"/>
</dbReference>
<dbReference type="FunFam" id="2.40.50.100:FF:000001">
    <property type="entry name" value="50S ribosomal protein L27"/>
    <property type="match status" value="1"/>
</dbReference>
<dbReference type="Gene3D" id="2.40.50.100">
    <property type="match status" value="1"/>
</dbReference>
<dbReference type="HAMAP" id="MF_00539">
    <property type="entry name" value="Ribosomal_bL27"/>
    <property type="match status" value="1"/>
</dbReference>
<dbReference type="InterPro" id="IPR001684">
    <property type="entry name" value="Ribosomal_bL27"/>
</dbReference>
<dbReference type="InterPro" id="IPR018261">
    <property type="entry name" value="Ribosomal_bL27_CS"/>
</dbReference>
<dbReference type="NCBIfam" id="TIGR00062">
    <property type="entry name" value="L27"/>
    <property type="match status" value="1"/>
</dbReference>
<dbReference type="PANTHER" id="PTHR15893:SF0">
    <property type="entry name" value="LARGE RIBOSOMAL SUBUNIT PROTEIN BL27M"/>
    <property type="match status" value="1"/>
</dbReference>
<dbReference type="PANTHER" id="PTHR15893">
    <property type="entry name" value="RIBOSOMAL PROTEIN L27"/>
    <property type="match status" value="1"/>
</dbReference>
<dbReference type="Pfam" id="PF01016">
    <property type="entry name" value="Ribosomal_L27"/>
    <property type="match status" value="1"/>
</dbReference>
<dbReference type="PRINTS" id="PR00063">
    <property type="entry name" value="RIBOSOMALL27"/>
</dbReference>
<dbReference type="SUPFAM" id="SSF110324">
    <property type="entry name" value="Ribosomal L27 protein-like"/>
    <property type="match status" value="1"/>
</dbReference>
<dbReference type="PROSITE" id="PS00831">
    <property type="entry name" value="RIBOSOMAL_L27"/>
    <property type="match status" value="1"/>
</dbReference>
<comment type="similarity">
    <text evidence="1">Belongs to the bacterial ribosomal protein bL27 family.</text>
</comment>
<reference key="1">
    <citation type="submission" date="2006-05" db="EMBL/GenBank/DDBJ databases">
        <title>Complete sequence of chromosome 1 of Burkholderia cenocepacia AU 1054.</title>
        <authorList>
            <consortium name="US DOE Joint Genome Institute"/>
            <person name="Copeland A."/>
            <person name="Lucas S."/>
            <person name="Lapidus A."/>
            <person name="Barry K."/>
            <person name="Detter J.C."/>
            <person name="Glavina del Rio T."/>
            <person name="Hammon N."/>
            <person name="Israni S."/>
            <person name="Dalin E."/>
            <person name="Tice H."/>
            <person name="Pitluck S."/>
            <person name="Chain P."/>
            <person name="Malfatti S."/>
            <person name="Shin M."/>
            <person name="Vergez L."/>
            <person name="Schmutz J."/>
            <person name="Larimer F."/>
            <person name="Land M."/>
            <person name="Hauser L."/>
            <person name="Kyrpides N."/>
            <person name="Lykidis A."/>
            <person name="LiPuma J.J."/>
            <person name="Konstantinidis K."/>
            <person name="Tiedje J.M."/>
            <person name="Richardson P."/>
        </authorList>
    </citation>
    <scope>NUCLEOTIDE SEQUENCE [LARGE SCALE GENOMIC DNA]</scope>
    <source>
        <strain>AU 1054</strain>
    </source>
</reference>
<feature type="chain" id="PRO_1000017426" description="Large ribosomal subunit protein bL27">
    <location>
        <begin position="1"/>
        <end position="87"/>
    </location>
</feature>
<feature type="region of interest" description="Disordered" evidence="2">
    <location>
        <begin position="1"/>
        <end position="21"/>
    </location>
</feature>
<keyword id="KW-0687">Ribonucleoprotein</keyword>
<keyword id="KW-0689">Ribosomal protein</keyword>
<evidence type="ECO:0000255" key="1">
    <source>
        <dbReference type="HAMAP-Rule" id="MF_00539"/>
    </source>
</evidence>
<evidence type="ECO:0000256" key="2">
    <source>
        <dbReference type="SAM" id="MobiDB-lite"/>
    </source>
</evidence>
<evidence type="ECO:0000305" key="3"/>
<name>RL27_BURO1</name>
<sequence>MAHKKAGGSSRNGRDSESKRLGVKVYGGQAINAGGIIVRQRGTRMHAGENVGMGKDHTLFALVDGHVKFATKGADKKHLVIVVPAAA</sequence>
<accession>Q1BZE1</accession>
<proteinExistence type="inferred from homology"/>